<keyword id="KW-0010">Activator</keyword>
<keyword id="KW-0963">Cytoplasm</keyword>
<keyword id="KW-0678">Repressor</keyword>
<keyword id="KW-0694">RNA-binding</keyword>
<keyword id="KW-0810">Translation regulation</keyword>
<evidence type="ECO:0000255" key="1">
    <source>
        <dbReference type="HAMAP-Rule" id="MF_00167"/>
    </source>
</evidence>
<gene>
    <name evidence="1" type="primary">csrA</name>
    <name type="ordered locus">CGSHiEE_07995</name>
</gene>
<organism>
    <name type="scientific">Haemophilus influenzae (strain PittEE)</name>
    <dbReference type="NCBI Taxonomy" id="374930"/>
    <lineage>
        <taxon>Bacteria</taxon>
        <taxon>Pseudomonadati</taxon>
        <taxon>Pseudomonadota</taxon>
        <taxon>Gammaproteobacteria</taxon>
        <taxon>Pasteurellales</taxon>
        <taxon>Pasteurellaceae</taxon>
        <taxon>Haemophilus</taxon>
    </lineage>
</organism>
<dbReference type="EMBL" id="CP000671">
    <property type="protein sequence ID" value="ABQ98912.1"/>
    <property type="molecule type" value="Genomic_DNA"/>
</dbReference>
<dbReference type="SMR" id="A5UDR1"/>
<dbReference type="KEGG" id="hip:CGSHiEE_07995"/>
<dbReference type="HOGENOM" id="CLU_164837_2_1_6"/>
<dbReference type="GO" id="GO:0005829">
    <property type="term" value="C:cytosol"/>
    <property type="evidence" value="ECO:0007669"/>
    <property type="project" value="TreeGrafter"/>
</dbReference>
<dbReference type="GO" id="GO:0048027">
    <property type="term" value="F:mRNA 5'-UTR binding"/>
    <property type="evidence" value="ECO:0007669"/>
    <property type="project" value="UniProtKB-UniRule"/>
</dbReference>
<dbReference type="GO" id="GO:0006402">
    <property type="term" value="P:mRNA catabolic process"/>
    <property type="evidence" value="ECO:0007669"/>
    <property type="project" value="InterPro"/>
</dbReference>
<dbReference type="GO" id="GO:0045947">
    <property type="term" value="P:negative regulation of translational initiation"/>
    <property type="evidence" value="ECO:0007669"/>
    <property type="project" value="UniProtKB-UniRule"/>
</dbReference>
<dbReference type="GO" id="GO:0045948">
    <property type="term" value="P:positive regulation of translational initiation"/>
    <property type="evidence" value="ECO:0007669"/>
    <property type="project" value="UniProtKB-UniRule"/>
</dbReference>
<dbReference type="GO" id="GO:0006109">
    <property type="term" value="P:regulation of carbohydrate metabolic process"/>
    <property type="evidence" value="ECO:0007669"/>
    <property type="project" value="UniProtKB-UniRule"/>
</dbReference>
<dbReference type="FunFam" id="2.60.40.4380:FF:000001">
    <property type="entry name" value="Translational regulator CsrA"/>
    <property type="match status" value="1"/>
</dbReference>
<dbReference type="Gene3D" id="2.60.40.4380">
    <property type="entry name" value="Translational regulator CsrA"/>
    <property type="match status" value="1"/>
</dbReference>
<dbReference type="HAMAP" id="MF_00167">
    <property type="entry name" value="CsrA"/>
    <property type="match status" value="1"/>
</dbReference>
<dbReference type="InterPro" id="IPR003751">
    <property type="entry name" value="CsrA"/>
</dbReference>
<dbReference type="InterPro" id="IPR036107">
    <property type="entry name" value="CsrA_sf"/>
</dbReference>
<dbReference type="NCBIfam" id="TIGR00202">
    <property type="entry name" value="csrA"/>
    <property type="match status" value="1"/>
</dbReference>
<dbReference type="NCBIfam" id="NF002469">
    <property type="entry name" value="PRK01712.1"/>
    <property type="match status" value="1"/>
</dbReference>
<dbReference type="PANTHER" id="PTHR34984">
    <property type="entry name" value="CARBON STORAGE REGULATOR"/>
    <property type="match status" value="1"/>
</dbReference>
<dbReference type="PANTHER" id="PTHR34984:SF1">
    <property type="entry name" value="CARBON STORAGE REGULATOR"/>
    <property type="match status" value="1"/>
</dbReference>
<dbReference type="Pfam" id="PF02599">
    <property type="entry name" value="CsrA"/>
    <property type="match status" value="1"/>
</dbReference>
<dbReference type="SUPFAM" id="SSF117130">
    <property type="entry name" value="CsrA-like"/>
    <property type="match status" value="1"/>
</dbReference>
<comment type="function">
    <text evidence="1">A key translational regulator that binds mRNA to regulate translation initiation and/or mRNA stability. Mediates global changes in gene expression, shifting from rapid growth to stress survival by linking envelope stress, the stringent response and the catabolite repression systems. Usually binds in the 5'-UTR; binding at or near the Shine-Dalgarno sequence prevents ribosome-binding, repressing translation, binding elsewhere in the 5'-UTR can activate translation and/or stabilize the mRNA. Its function is antagonized by small RNA(s).</text>
</comment>
<comment type="subunit">
    <text evidence="1">Homodimer; the beta-strands of each monomer intercalate to form a hydrophobic core, while the alpha-helices form wings that extend away from the core.</text>
</comment>
<comment type="subcellular location">
    <subcellularLocation>
        <location evidence="1">Cytoplasm</location>
    </subcellularLocation>
</comment>
<comment type="similarity">
    <text evidence="1">Belongs to the CsrA/RsmA family.</text>
</comment>
<protein>
    <recommendedName>
        <fullName evidence="1">Translational regulator CsrA</fullName>
    </recommendedName>
    <alternativeName>
        <fullName evidence="1">Carbon storage regulator</fullName>
    </alternativeName>
</protein>
<feature type="chain" id="PRO_1000023387" description="Translational regulator CsrA">
    <location>
        <begin position="1"/>
        <end position="63"/>
    </location>
</feature>
<sequence>MLILTRKVGESVLIGDDISITVLSVRGNQVKLGVEAPKEVSVHREEIYQRIKQTKDEPYLASS</sequence>
<name>CSRA_HAEIE</name>
<proteinExistence type="inferred from homology"/>
<accession>A5UDR1</accession>
<reference key="1">
    <citation type="journal article" date="2007" name="Genome Biol.">
        <title>Characterization and modeling of the Haemophilus influenzae core and supragenomes based on the complete genomic sequences of Rd and 12 clinical nontypeable strains.</title>
        <authorList>
            <person name="Hogg J.S."/>
            <person name="Hu F.Z."/>
            <person name="Janto B."/>
            <person name="Boissy R."/>
            <person name="Hayes J."/>
            <person name="Keefe R."/>
            <person name="Post J.C."/>
            <person name="Ehrlich G.D."/>
        </authorList>
    </citation>
    <scope>NUCLEOTIDE SEQUENCE [LARGE SCALE GENOMIC DNA]</scope>
    <source>
        <strain>PittEE</strain>
    </source>
</reference>